<keyword id="KW-0067">ATP-binding</keyword>
<keyword id="KW-0378">Hydrolase</keyword>
<keyword id="KW-0496">Mitochondrion</keyword>
<keyword id="KW-0547">Nucleotide-binding</keyword>
<keyword id="KW-0645">Protease</keyword>
<keyword id="KW-1185">Reference proteome</keyword>
<keyword id="KW-0809">Transit peptide</keyword>
<proteinExistence type="evidence at transcript level"/>
<evidence type="ECO:0000250" key="1">
    <source>
        <dbReference type="UniProtKB" id="B1J693"/>
    </source>
</evidence>
<evidence type="ECO:0000255" key="2"/>
<evidence type="ECO:0000256" key="3">
    <source>
        <dbReference type="SAM" id="MobiDB-lite"/>
    </source>
</evidence>
<evidence type="ECO:0000303" key="4">
    <source ref="4"/>
</evidence>
<evidence type="ECO:0000305" key="5"/>
<evidence type="ECO:0000312" key="6">
    <source>
        <dbReference type="Araport" id="AT1G33360"/>
    </source>
</evidence>
<evidence type="ECO:0000312" key="7">
    <source>
        <dbReference type="EMBL" id="AAG51217.1"/>
    </source>
</evidence>
<evidence type="ECO:0000312" key="8">
    <source>
        <dbReference type="EMBL" id="AAG51286.1"/>
    </source>
</evidence>
<evidence type="ECO:0000312" key="9">
    <source>
        <dbReference type="EMBL" id="AAU05486.1"/>
    </source>
</evidence>
<sequence>MSGLWRLRNLKSLALHARSISPVSNLYSLELGSCPRRRIQERFKSEQGGGGGGGDDFPVPVTRRKLRAEPNCPRCSKQMDLLFSNRQFPSSNLLQRPDDSDSSGAGDKTNFQSVNFCPTCKTAYGFNPRGVSPLQGTFIEIGRVQSPTTTTTNATTSKSTRKQQQHSKDPNQGFNYRNKLRSSFWDTLRSYGAEPPEDWSPPPPHSPLNSSPPNTIPVNASPSAVDTSPLPDAVNDVSRWGGAGLGRDFPTPKEICKWLDKFVIGQSRAKKVLSVAVYNHYKRIYHTSMKKGSAAQPIDDDDNVELDKSNVLLMGPTGSGKTLLAKTLARLVNVPFVIADATTLTQAGYVGDDVESILHKLLTVAEFNVQAAQQGIVYIDEVDKITKKAESLNISRDVSGEGVQQALLKLLEGTIVNVPGKGARKHPRGDHIQIDTKDILFICGGAFVDLEKTIVDRRQDSSIGFGAPVRANMATSGVTSGAITSSLLESVESADLTAYGLIPEFVGRFPILVSLSALTEDQLIRVLVEPKNALGKQYKKLFSMNNVKLHFTEKALEIISKQAMVKNTGARGLRALLESILTEAMFEIPDDKKGDERIDAVIVDEESTSSEASRGCTAKILRGDGAFERYLSENKSKDATEPMVDERVGSAKAMRL</sequence>
<gene>
    <name evidence="4" type="primary">CLPX3</name>
    <name evidence="6" type="ordered locus">At1g33360</name>
    <name evidence="7" type="ORF">F10C21.5</name>
    <name evidence="8" type="ORF">T16O9.5</name>
</gene>
<feature type="transit peptide" description="Mitochondrion" evidence="2">
    <location>
        <begin position="1"/>
        <end position="44"/>
    </location>
</feature>
<feature type="chain" id="PRO_0000434550" description="CLP protease regulatory subunit CLPX3, mitochondrial" evidence="2">
    <location>
        <begin position="45"/>
        <end position="656"/>
    </location>
</feature>
<feature type="region of interest" description="Disordered" evidence="3">
    <location>
        <begin position="142"/>
        <end position="177"/>
    </location>
</feature>
<feature type="region of interest" description="Disordered" evidence="3">
    <location>
        <begin position="193"/>
        <end position="235"/>
    </location>
</feature>
<feature type="region of interest" description="Disordered" evidence="3">
    <location>
        <begin position="634"/>
        <end position="656"/>
    </location>
</feature>
<feature type="compositionally biased region" description="Low complexity" evidence="3">
    <location>
        <begin position="146"/>
        <end position="158"/>
    </location>
</feature>
<feature type="compositionally biased region" description="Polar residues" evidence="3">
    <location>
        <begin position="216"/>
        <end position="226"/>
    </location>
</feature>
<feature type="compositionally biased region" description="Basic and acidic residues" evidence="3">
    <location>
        <begin position="634"/>
        <end position="649"/>
    </location>
</feature>
<feature type="binding site" evidence="1">
    <location>
        <begin position="316"/>
        <end position="323"/>
    </location>
    <ligand>
        <name>ATP</name>
        <dbReference type="ChEBI" id="CHEBI:30616"/>
    </ligand>
</feature>
<accession>Q66GN9</accession>
<accession>Q9C814</accession>
<accession>Q9C874</accession>
<reference key="1">
    <citation type="journal article" date="2000" name="Nature">
        <title>Sequence and analysis of chromosome 1 of the plant Arabidopsis thaliana.</title>
        <authorList>
            <person name="Theologis A."/>
            <person name="Ecker J.R."/>
            <person name="Palm C.J."/>
            <person name="Federspiel N.A."/>
            <person name="Kaul S."/>
            <person name="White O."/>
            <person name="Alonso J."/>
            <person name="Altafi H."/>
            <person name="Araujo R."/>
            <person name="Bowman C.L."/>
            <person name="Brooks S.Y."/>
            <person name="Buehler E."/>
            <person name="Chan A."/>
            <person name="Chao Q."/>
            <person name="Chen H."/>
            <person name="Cheuk R.F."/>
            <person name="Chin C.W."/>
            <person name="Chung M.K."/>
            <person name="Conn L."/>
            <person name="Conway A.B."/>
            <person name="Conway A.R."/>
            <person name="Creasy T.H."/>
            <person name="Dewar K."/>
            <person name="Dunn P."/>
            <person name="Etgu P."/>
            <person name="Feldblyum T.V."/>
            <person name="Feng J.-D."/>
            <person name="Fong B."/>
            <person name="Fujii C.Y."/>
            <person name="Gill J.E."/>
            <person name="Goldsmith A.D."/>
            <person name="Haas B."/>
            <person name="Hansen N.F."/>
            <person name="Hughes B."/>
            <person name="Huizar L."/>
            <person name="Hunter J.L."/>
            <person name="Jenkins J."/>
            <person name="Johnson-Hopson C."/>
            <person name="Khan S."/>
            <person name="Khaykin E."/>
            <person name="Kim C.J."/>
            <person name="Koo H.L."/>
            <person name="Kremenetskaia I."/>
            <person name="Kurtz D.B."/>
            <person name="Kwan A."/>
            <person name="Lam B."/>
            <person name="Langin-Hooper S."/>
            <person name="Lee A."/>
            <person name="Lee J.M."/>
            <person name="Lenz C.A."/>
            <person name="Li J.H."/>
            <person name="Li Y.-P."/>
            <person name="Lin X."/>
            <person name="Liu S.X."/>
            <person name="Liu Z.A."/>
            <person name="Luros J.S."/>
            <person name="Maiti R."/>
            <person name="Marziali A."/>
            <person name="Militscher J."/>
            <person name="Miranda M."/>
            <person name="Nguyen M."/>
            <person name="Nierman W.C."/>
            <person name="Osborne B.I."/>
            <person name="Pai G."/>
            <person name="Peterson J."/>
            <person name="Pham P.K."/>
            <person name="Rizzo M."/>
            <person name="Rooney T."/>
            <person name="Rowley D."/>
            <person name="Sakano H."/>
            <person name="Salzberg S.L."/>
            <person name="Schwartz J.R."/>
            <person name="Shinn P."/>
            <person name="Southwick A.M."/>
            <person name="Sun H."/>
            <person name="Tallon L.J."/>
            <person name="Tambunga G."/>
            <person name="Toriumi M.J."/>
            <person name="Town C.D."/>
            <person name="Utterback T."/>
            <person name="Van Aken S."/>
            <person name="Vaysberg M."/>
            <person name="Vysotskaia V.S."/>
            <person name="Walker M."/>
            <person name="Wu D."/>
            <person name="Yu G."/>
            <person name="Fraser C.M."/>
            <person name="Venter J.C."/>
            <person name="Davis R.W."/>
        </authorList>
    </citation>
    <scope>NUCLEOTIDE SEQUENCE [LARGE SCALE GENOMIC DNA]</scope>
    <source>
        <strain>cv. Columbia</strain>
    </source>
</reference>
<reference key="2">
    <citation type="journal article" date="2017" name="Plant J.">
        <title>Araport11: a complete reannotation of the Arabidopsis thaliana reference genome.</title>
        <authorList>
            <person name="Cheng C.Y."/>
            <person name="Krishnakumar V."/>
            <person name="Chan A.P."/>
            <person name="Thibaud-Nissen F."/>
            <person name="Schobel S."/>
            <person name="Town C.D."/>
        </authorList>
    </citation>
    <scope>GENOME REANNOTATION</scope>
    <source>
        <strain>cv. Columbia</strain>
    </source>
</reference>
<reference key="3">
    <citation type="journal article" date="2003" name="Science">
        <title>Empirical analysis of transcriptional activity in the Arabidopsis genome.</title>
        <authorList>
            <person name="Yamada K."/>
            <person name="Lim J."/>
            <person name="Dale J.M."/>
            <person name="Chen H."/>
            <person name="Shinn P."/>
            <person name="Palm C.J."/>
            <person name="Southwick A.M."/>
            <person name="Wu H.C."/>
            <person name="Kim C.J."/>
            <person name="Nguyen M."/>
            <person name="Pham P.K."/>
            <person name="Cheuk R.F."/>
            <person name="Karlin-Newmann G."/>
            <person name="Liu S.X."/>
            <person name="Lam B."/>
            <person name="Sakano H."/>
            <person name="Wu T."/>
            <person name="Yu G."/>
            <person name="Miranda M."/>
            <person name="Quach H.L."/>
            <person name="Tripp M."/>
            <person name="Chang C.H."/>
            <person name="Lee J.M."/>
            <person name="Toriumi M.J."/>
            <person name="Chan M.M."/>
            <person name="Tang C.C."/>
            <person name="Onodera C.S."/>
            <person name="Deng J.M."/>
            <person name="Akiyama K."/>
            <person name="Ansari Y."/>
            <person name="Arakawa T."/>
            <person name="Banh J."/>
            <person name="Banno F."/>
            <person name="Bowser L."/>
            <person name="Brooks S.Y."/>
            <person name="Carninci P."/>
            <person name="Chao Q."/>
            <person name="Choy N."/>
            <person name="Enju A."/>
            <person name="Goldsmith A.D."/>
            <person name="Gurjal M."/>
            <person name="Hansen N.F."/>
            <person name="Hayashizaki Y."/>
            <person name="Johnson-Hopson C."/>
            <person name="Hsuan V.W."/>
            <person name="Iida K."/>
            <person name="Karnes M."/>
            <person name="Khan S."/>
            <person name="Koesema E."/>
            <person name="Ishida J."/>
            <person name="Jiang P.X."/>
            <person name="Jones T."/>
            <person name="Kawai J."/>
            <person name="Kamiya A."/>
            <person name="Meyers C."/>
            <person name="Nakajima M."/>
            <person name="Narusaka M."/>
            <person name="Seki M."/>
            <person name="Sakurai T."/>
            <person name="Satou M."/>
            <person name="Tamse R."/>
            <person name="Vaysberg M."/>
            <person name="Wallender E.K."/>
            <person name="Wong C."/>
            <person name="Yamamura Y."/>
            <person name="Yuan S."/>
            <person name="Shinozaki K."/>
            <person name="Davis R.W."/>
            <person name="Theologis A."/>
            <person name="Ecker J.R."/>
        </authorList>
    </citation>
    <scope>NUCLEOTIDE SEQUENCE [LARGE SCALE MRNA]</scope>
    <source>
        <strain>cv. Columbia</strain>
    </source>
</reference>
<reference key="4">
    <citation type="journal article" date="2005" name="Physiol. Plantarum">
        <title>The ATP-dependent Clp protease in chloroplasts of higher plants.</title>
        <authorList>
            <person name="Clarke A.K."/>
            <person name="MacDonald T.M."/>
            <person name="Sjoegren L.L."/>
        </authorList>
    </citation>
    <scope>NOMENCLATURE</scope>
</reference>
<dbReference type="EMBL" id="AC027035">
    <property type="protein sequence ID" value="AAG51286.1"/>
    <property type="status" value="ALT_SEQ"/>
    <property type="molecule type" value="Genomic_DNA"/>
</dbReference>
<dbReference type="EMBL" id="AC051630">
    <property type="protein sequence ID" value="AAG51217.1"/>
    <property type="status" value="ALT_SEQ"/>
    <property type="molecule type" value="Genomic_DNA"/>
</dbReference>
<dbReference type="EMBL" id="CP002684">
    <property type="protein sequence ID" value="AEE31587.1"/>
    <property type="molecule type" value="Genomic_DNA"/>
</dbReference>
<dbReference type="EMBL" id="BT015363">
    <property type="protein sequence ID" value="AAU05486.1"/>
    <property type="molecule type" value="mRNA"/>
</dbReference>
<dbReference type="EMBL" id="BT015893">
    <property type="protein sequence ID" value="AAU95429.1"/>
    <property type="molecule type" value="mRNA"/>
</dbReference>
<dbReference type="PIR" id="D86457">
    <property type="entry name" value="D86457"/>
</dbReference>
<dbReference type="RefSeq" id="NP_564423.3">
    <property type="nucleotide sequence ID" value="NM_103063.4"/>
</dbReference>
<dbReference type="SMR" id="Q66GN9"/>
<dbReference type="FunCoup" id="Q66GN9">
    <property type="interactions" value="3503"/>
</dbReference>
<dbReference type="STRING" id="3702.Q66GN9"/>
<dbReference type="iPTMnet" id="Q66GN9"/>
<dbReference type="PaxDb" id="3702-AT1G33360.1"/>
<dbReference type="ProteomicsDB" id="222098"/>
<dbReference type="EnsemblPlants" id="AT1G33360.1">
    <property type="protein sequence ID" value="AT1G33360.1"/>
    <property type="gene ID" value="AT1G33360"/>
</dbReference>
<dbReference type="GeneID" id="840230"/>
<dbReference type="Gramene" id="AT1G33360.1">
    <property type="protein sequence ID" value="AT1G33360.1"/>
    <property type="gene ID" value="AT1G33360"/>
</dbReference>
<dbReference type="KEGG" id="ath:AT1G33360"/>
<dbReference type="Araport" id="AT1G33360"/>
<dbReference type="TAIR" id="AT1G33360"/>
<dbReference type="eggNOG" id="KOG0745">
    <property type="taxonomic scope" value="Eukaryota"/>
</dbReference>
<dbReference type="HOGENOM" id="CLU_014218_6_0_1"/>
<dbReference type="InParanoid" id="Q66GN9"/>
<dbReference type="OMA" id="NIGCNRR"/>
<dbReference type="OrthoDB" id="1721884at2759"/>
<dbReference type="PhylomeDB" id="Q66GN9"/>
<dbReference type="PRO" id="PR:Q66GN9"/>
<dbReference type="Proteomes" id="UP000006548">
    <property type="component" value="Chromosome 1"/>
</dbReference>
<dbReference type="ExpressionAtlas" id="Q66GN9">
    <property type="expression patterns" value="baseline and differential"/>
</dbReference>
<dbReference type="GO" id="GO:0005739">
    <property type="term" value="C:mitochondrion"/>
    <property type="evidence" value="ECO:0007669"/>
    <property type="project" value="UniProtKB-SubCell"/>
</dbReference>
<dbReference type="GO" id="GO:0005524">
    <property type="term" value="F:ATP binding"/>
    <property type="evidence" value="ECO:0007669"/>
    <property type="project" value="UniProtKB-KW"/>
</dbReference>
<dbReference type="GO" id="GO:0016887">
    <property type="term" value="F:ATP hydrolysis activity"/>
    <property type="evidence" value="ECO:0007669"/>
    <property type="project" value="InterPro"/>
</dbReference>
<dbReference type="GO" id="GO:0140662">
    <property type="term" value="F:ATP-dependent protein folding chaperone"/>
    <property type="evidence" value="ECO:0007669"/>
    <property type="project" value="InterPro"/>
</dbReference>
<dbReference type="GO" id="GO:0008233">
    <property type="term" value="F:peptidase activity"/>
    <property type="evidence" value="ECO:0007669"/>
    <property type="project" value="UniProtKB-KW"/>
</dbReference>
<dbReference type="GO" id="GO:0051082">
    <property type="term" value="F:unfolded protein binding"/>
    <property type="evidence" value="ECO:0007669"/>
    <property type="project" value="InterPro"/>
</dbReference>
<dbReference type="GO" id="GO:0006508">
    <property type="term" value="P:proteolysis"/>
    <property type="evidence" value="ECO:0007669"/>
    <property type="project" value="UniProtKB-KW"/>
</dbReference>
<dbReference type="CDD" id="cd19497">
    <property type="entry name" value="RecA-like_ClpX"/>
    <property type="match status" value="1"/>
</dbReference>
<dbReference type="FunFam" id="1.10.8.60:FF:000002">
    <property type="entry name" value="ATP-dependent Clp protease ATP-binding subunit ClpX"/>
    <property type="match status" value="1"/>
</dbReference>
<dbReference type="FunFam" id="3.40.50.300:FF:000560">
    <property type="entry name" value="CLP protease regulatory subunit CLPX3 mitochondrial"/>
    <property type="match status" value="1"/>
</dbReference>
<dbReference type="Gene3D" id="1.10.8.60">
    <property type="match status" value="1"/>
</dbReference>
<dbReference type="Gene3D" id="3.40.50.300">
    <property type="entry name" value="P-loop containing nucleotide triphosphate hydrolases"/>
    <property type="match status" value="1"/>
</dbReference>
<dbReference type="InterPro" id="IPR003593">
    <property type="entry name" value="AAA+_ATPase"/>
</dbReference>
<dbReference type="InterPro" id="IPR050052">
    <property type="entry name" value="ATP-dep_Clp_protease_ClpX"/>
</dbReference>
<dbReference type="InterPro" id="IPR003959">
    <property type="entry name" value="ATPase_AAA_core"/>
</dbReference>
<dbReference type="InterPro" id="IPR019489">
    <property type="entry name" value="Clp_ATPase_C"/>
</dbReference>
<dbReference type="InterPro" id="IPR004487">
    <property type="entry name" value="Clp_protease_ATP-bd_su_ClpX"/>
</dbReference>
<dbReference type="InterPro" id="IPR027417">
    <property type="entry name" value="P-loop_NTPase"/>
</dbReference>
<dbReference type="NCBIfam" id="TIGR00382">
    <property type="entry name" value="clpX"/>
    <property type="match status" value="1"/>
</dbReference>
<dbReference type="NCBIfam" id="NF003745">
    <property type="entry name" value="PRK05342.1"/>
    <property type="match status" value="1"/>
</dbReference>
<dbReference type="PANTHER" id="PTHR48102:SF7">
    <property type="entry name" value="ATP-DEPENDENT CLP PROTEASE ATP-BINDING SUBUNIT CLPX-LIKE, MITOCHONDRIAL"/>
    <property type="match status" value="1"/>
</dbReference>
<dbReference type="PANTHER" id="PTHR48102">
    <property type="entry name" value="ATP-DEPENDENT CLP PROTEASE ATP-BINDING SUBUNIT CLPX-LIKE, MITOCHONDRIAL-RELATED"/>
    <property type="match status" value="1"/>
</dbReference>
<dbReference type="Pfam" id="PF07724">
    <property type="entry name" value="AAA_2"/>
    <property type="match status" value="1"/>
</dbReference>
<dbReference type="Pfam" id="PF10431">
    <property type="entry name" value="ClpB_D2-small"/>
    <property type="match status" value="1"/>
</dbReference>
<dbReference type="SMART" id="SM00382">
    <property type="entry name" value="AAA"/>
    <property type="match status" value="1"/>
</dbReference>
<dbReference type="SMART" id="SM01086">
    <property type="entry name" value="ClpB_D2-small"/>
    <property type="match status" value="1"/>
</dbReference>
<dbReference type="SUPFAM" id="SSF52540">
    <property type="entry name" value="P-loop containing nucleoside triphosphate hydrolases"/>
    <property type="match status" value="1"/>
</dbReference>
<protein>
    <recommendedName>
        <fullName evidence="4">CLP protease regulatory subunit CLPX3, mitochondrial</fullName>
    </recommendedName>
</protein>
<comment type="function">
    <text evidence="1">ATP-dependent specificity component of the mitochondrial Clp protease. It directs the protease to specific substrates. Can perform chaperone functions in the absence of ClpP.</text>
</comment>
<comment type="subcellular location">
    <subcellularLocation>
        <location evidence="2">Mitochondrion</location>
    </subcellularLocation>
</comment>
<comment type="similarity">
    <text evidence="5">Belongs to the ClpX chaperone family.</text>
</comment>
<comment type="sequence caution" evidence="5">
    <conflict type="erroneous gene model prediction">
        <sequence resource="EMBL-CDS" id="AAG51217"/>
    </conflict>
</comment>
<comment type="sequence caution" evidence="5">
    <conflict type="erroneous gene model prediction">
        <sequence resource="EMBL-CDS" id="AAG51286"/>
    </conflict>
</comment>
<organism evidence="9">
    <name type="scientific">Arabidopsis thaliana</name>
    <name type="common">Mouse-ear cress</name>
    <dbReference type="NCBI Taxonomy" id="3702"/>
    <lineage>
        <taxon>Eukaryota</taxon>
        <taxon>Viridiplantae</taxon>
        <taxon>Streptophyta</taxon>
        <taxon>Embryophyta</taxon>
        <taxon>Tracheophyta</taxon>
        <taxon>Spermatophyta</taxon>
        <taxon>Magnoliopsida</taxon>
        <taxon>eudicotyledons</taxon>
        <taxon>Gunneridae</taxon>
        <taxon>Pentapetalae</taxon>
        <taxon>rosids</taxon>
        <taxon>malvids</taxon>
        <taxon>Brassicales</taxon>
        <taxon>Brassicaceae</taxon>
        <taxon>Camelineae</taxon>
        <taxon>Arabidopsis</taxon>
    </lineage>
</organism>
<name>CLPX3_ARATH</name>